<accession>Q9S7P8</accession>
<evidence type="ECO:0000256" key="1">
    <source>
        <dbReference type="SAM" id="MobiDB-lite"/>
    </source>
</evidence>
<evidence type="ECO:0000269" key="2">
    <source>
    </source>
</evidence>
<evidence type="ECO:0000305" key="3"/>
<evidence type="ECO:0007744" key="4">
    <source>
    </source>
</evidence>
<keyword id="KW-0025">Alternative splicing</keyword>
<keyword id="KW-0493">Microtubule</keyword>
<keyword id="KW-0597">Phosphoprotein</keyword>
<keyword id="KW-1185">Reference proteome</keyword>
<sequence length="122" mass="12172">MGKARGVNNGVNESSLGYLFGSGQPSSAAAATMGTTTTTTTTTTTDGTGGRPITTTTTTVTDNKKTSAGVRGSPNNYFRSEGQNCGNFLTDRPSTKVHAAPGGGSSLDYLFGGPSPAGSGNK</sequence>
<gene>
    <name type="primary">SP1L3</name>
    <name type="ordered locus">At3g02180</name>
    <name type="ORF">F14P3.17</name>
    <name type="ORF">F1C9.3</name>
</gene>
<name>SP1L3_ARATH</name>
<comment type="function">
    <text evidence="2">Acts redundantly with SPR1 in maintaining the cortical microtubules organization essential for anisotropic cell growth.</text>
</comment>
<comment type="alternative products">
    <event type="alternative splicing"/>
    <isoform>
        <id>Q9S7P8-1</id>
        <name>1</name>
        <sequence type="displayed"/>
    </isoform>
    <text>A number of isoforms are produced. According to EST sequences.</text>
</comment>
<comment type="tissue specificity">
    <text evidence="2">Ubiquitous. Preferentially expressed in above-ground organs.</text>
</comment>
<comment type="similarity">
    <text evidence="3">Belongs to the SPIRAL1 family.</text>
</comment>
<reference key="1">
    <citation type="journal article" date="2000" name="Nature">
        <title>Sequence and analysis of chromosome 3 of the plant Arabidopsis thaliana.</title>
        <authorList>
            <person name="Salanoubat M."/>
            <person name="Lemcke K."/>
            <person name="Rieger M."/>
            <person name="Ansorge W."/>
            <person name="Unseld M."/>
            <person name="Fartmann B."/>
            <person name="Valle G."/>
            <person name="Bloecker H."/>
            <person name="Perez-Alonso M."/>
            <person name="Obermaier B."/>
            <person name="Delseny M."/>
            <person name="Boutry M."/>
            <person name="Grivell L.A."/>
            <person name="Mache R."/>
            <person name="Puigdomenech P."/>
            <person name="De Simone V."/>
            <person name="Choisne N."/>
            <person name="Artiguenave F."/>
            <person name="Robert C."/>
            <person name="Brottier P."/>
            <person name="Wincker P."/>
            <person name="Cattolico L."/>
            <person name="Weissenbach J."/>
            <person name="Saurin W."/>
            <person name="Quetier F."/>
            <person name="Schaefer M."/>
            <person name="Mueller-Auer S."/>
            <person name="Gabel C."/>
            <person name="Fuchs M."/>
            <person name="Benes V."/>
            <person name="Wurmbach E."/>
            <person name="Drzonek H."/>
            <person name="Erfle H."/>
            <person name="Jordan N."/>
            <person name="Bangert S."/>
            <person name="Wiedelmann R."/>
            <person name="Kranz H."/>
            <person name="Voss H."/>
            <person name="Holland R."/>
            <person name="Brandt P."/>
            <person name="Nyakatura G."/>
            <person name="Vezzi A."/>
            <person name="D'Angelo M."/>
            <person name="Pallavicini A."/>
            <person name="Toppo S."/>
            <person name="Simionati B."/>
            <person name="Conrad A."/>
            <person name="Hornischer K."/>
            <person name="Kauer G."/>
            <person name="Loehnert T.-H."/>
            <person name="Nordsiek G."/>
            <person name="Reichelt J."/>
            <person name="Scharfe M."/>
            <person name="Schoen O."/>
            <person name="Bargues M."/>
            <person name="Terol J."/>
            <person name="Climent J."/>
            <person name="Navarro P."/>
            <person name="Collado C."/>
            <person name="Perez-Perez A."/>
            <person name="Ottenwaelder B."/>
            <person name="Duchemin D."/>
            <person name="Cooke R."/>
            <person name="Laudie M."/>
            <person name="Berger-Llauro C."/>
            <person name="Purnelle B."/>
            <person name="Masuy D."/>
            <person name="de Haan M."/>
            <person name="Maarse A.C."/>
            <person name="Alcaraz J.-P."/>
            <person name="Cottet A."/>
            <person name="Casacuberta E."/>
            <person name="Monfort A."/>
            <person name="Argiriou A."/>
            <person name="Flores M."/>
            <person name="Liguori R."/>
            <person name="Vitale D."/>
            <person name="Mannhaupt G."/>
            <person name="Haase D."/>
            <person name="Schoof H."/>
            <person name="Rudd S."/>
            <person name="Zaccaria P."/>
            <person name="Mewes H.-W."/>
            <person name="Mayer K.F.X."/>
            <person name="Kaul S."/>
            <person name="Town C.D."/>
            <person name="Koo H.L."/>
            <person name="Tallon L.J."/>
            <person name="Jenkins J."/>
            <person name="Rooney T."/>
            <person name="Rizzo M."/>
            <person name="Walts A."/>
            <person name="Utterback T."/>
            <person name="Fujii C.Y."/>
            <person name="Shea T.P."/>
            <person name="Creasy T.H."/>
            <person name="Haas B."/>
            <person name="Maiti R."/>
            <person name="Wu D."/>
            <person name="Peterson J."/>
            <person name="Van Aken S."/>
            <person name="Pai G."/>
            <person name="Militscher J."/>
            <person name="Sellers P."/>
            <person name="Gill J.E."/>
            <person name="Feldblyum T.V."/>
            <person name="Preuss D."/>
            <person name="Lin X."/>
            <person name="Nierman W.C."/>
            <person name="Salzberg S.L."/>
            <person name="White O."/>
            <person name="Venter J.C."/>
            <person name="Fraser C.M."/>
            <person name="Kaneko T."/>
            <person name="Nakamura Y."/>
            <person name="Sato S."/>
            <person name="Kato T."/>
            <person name="Asamizu E."/>
            <person name="Sasamoto S."/>
            <person name="Kimura T."/>
            <person name="Idesawa K."/>
            <person name="Kawashima K."/>
            <person name="Kishida Y."/>
            <person name="Kiyokawa C."/>
            <person name="Kohara M."/>
            <person name="Matsumoto M."/>
            <person name="Matsuno A."/>
            <person name="Muraki A."/>
            <person name="Nakayama S."/>
            <person name="Nakazaki N."/>
            <person name="Shinpo S."/>
            <person name="Takeuchi C."/>
            <person name="Wada T."/>
            <person name="Watanabe A."/>
            <person name="Yamada M."/>
            <person name="Yasuda M."/>
            <person name="Tabata S."/>
        </authorList>
    </citation>
    <scope>NUCLEOTIDE SEQUENCE [LARGE SCALE GENOMIC DNA]</scope>
    <source>
        <strain>cv. Columbia</strain>
    </source>
</reference>
<reference key="2">
    <citation type="journal article" date="2017" name="Plant J.">
        <title>Araport11: a complete reannotation of the Arabidopsis thaliana reference genome.</title>
        <authorList>
            <person name="Cheng C.Y."/>
            <person name="Krishnakumar V."/>
            <person name="Chan A.P."/>
            <person name="Thibaud-Nissen F."/>
            <person name="Schobel S."/>
            <person name="Town C.D."/>
        </authorList>
    </citation>
    <scope>GENOME REANNOTATION</scope>
    <source>
        <strain>cv. Columbia</strain>
    </source>
</reference>
<reference key="3">
    <citation type="journal article" date="2003" name="Science">
        <title>Empirical analysis of transcriptional activity in the Arabidopsis genome.</title>
        <authorList>
            <person name="Yamada K."/>
            <person name="Lim J."/>
            <person name="Dale J.M."/>
            <person name="Chen H."/>
            <person name="Shinn P."/>
            <person name="Palm C.J."/>
            <person name="Southwick A.M."/>
            <person name="Wu H.C."/>
            <person name="Kim C.J."/>
            <person name="Nguyen M."/>
            <person name="Pham P.K."/>
            <person name="Cheuk R.F."/>
            <person name="Karlin-Newmann G."/>
            <person name="Liu S.X."/>
            <person name="Lam B."/>
            <person name="Sakano H."/>
            <person name="Wu T."/>
            <person name="Yu G."/>
            <person name="Miranda M."/>
            <person name="Quach H.L."/>
            <person name="Tripp M."/>
            <person name="Chang C.H."/>
            <person name="Lee J.M."/>
            <person name="Toriumi M.J."/>
            <person name="Chan M.M."/>
            <person name="Tang C.C."/>
            <person name="Onodera C.S."/>
            <person name="Deng J.M."/>
            <person name="Akiyama K."/>
            <person name="Ansari Y."/>
            <person name="Arakawa T."/>
            <person name="Banh J."/>
            <person name="Banno F."/>
            <person name="Bowser L."/>
            <person name="Brooks S.Y."/>
            <person name="Carninci P."/>
            <person name="Chao Q."/>
            <person name="Choy N."/>
            <person name="Enju A."/>
            <person name="Goldsmith A.D."/>
            <person name="Gurjal M."/>
            <person name="Hansen N.F."/>
            <person name="Hayashizaki Y."/>
            <person name="Johnson-Hopson C."/>
            <person name="Hsuan V.W."/>
            <person name="Iida K."/>
            <person name="Karnes M."/>
            <person name="Khan S."/>
            <person name="Koesema E."/>
            <person name="Ishida J."/>
            <person name="Jiang P.X."/>
            <person name="Jones T."/>
            <person name="Kawai J."/>
            <person name="Kamiya A."/>
            <person name="Meyers C."/>
            <person name="Nakajima M."/>
            <person name="Narusaka M."/>
            <person name="Seki M."/>
            <person name="Sakurai T."/>
            <person name="Satou M."/>
            <person name="Tamse R."/>
            <person name="Vaysberg M."/>
            <person name="Wallender E.K."/>
            <person name="Wong C."/>
            <person name="Yamamura Y."/>
            <person name="Yuan S."/>
            <person name="Shinozaki K."/>
            <person name="Davis R.W."/>
            <person name="Theologis A."/>
            <person name="Ecker J.R."/>
        </authorList>
    </citation>
    <scope>NUCLEOTIDE SEQUENCE [LARGE SCALE MRNA]</scope>
    <source>
        <strain>cv. Columbia</strain>
    </source>
</reference>
<reference key="4">
    <citation type="submission" date="2002-03" db="EMBL/GenBank/DDBJ databases">
        <title>Full-length cDNA from Arabidopsis thaliana.</title>
        <authorList>
            <person name="Brover V.V."/>
            <person name="Troukhan M.E."/>
            <person name="Alexandrov N.A."/>
            <person name="Lu Y.-P."/>
            <person name="Flavell R.B."/>
            <person name="Feldmann K.A."/>
        </authorList>
    </citation>
    <scope>NUCLEOTIDE SEQUENCE [LARGE SCALE MRNA]</scope>
</reference>
<reference key="5">
    <citation type="book" date="2002" name="Proceedings of the 13th international conference on Arabidopsis research">
        <title>Functional analysis of SPIRAL1-LIKE genes.</title>
        <authorList>
            <person name="Nakajima K."/>
            <person name="Kawamura T."/>
            <person name="Furutani I."/>
            <person name="Hashimoto T."/>
        </authorList>
    </citation>
    <scope>GENE FAMILY</scope>
</reference>
<reference key="6">
    <citation type="journal article" date="2006" name="Plant Cell Physiol.">
        <title>Role of the SPIRAL1 gene family in anisotropic growth of Arabidopsis thaliana.</title>
        <authorList>
            <person name="Nakajima K."/>
            <person name="Kawamura T."/>
            <person name="Hashimoto T."/>
        </authorList>
    </citation>
    <scope>FUNCTION</scope>
    <scope>TISSUE SPECIFICITY</scope>
    <scope>GENE FAMILY</scope>
</reference>
<reference key="7">
    <citation type="journal article" date="2009" name="Plant Physiol.">
        <title>Large-scale Arabidopsis phosphoproteome profiling reveals novel chloroplast kinase substrates and phosphorylation networks.</title>
        <authorList>
            <person name="Reiland S."/>
            <person name="Messerli G."/>
            <person name="Baerenfaller K."/>
            <person name="Gerrits B."/>
            <person name="Endler A."/>
            <person name="Grossmann J."/>
            <person name="Gruissem W."/>
            <person name="Baginsky S."/>
        </authorList>
    </citation>
    <scope>PHOSPHORYLATION [LARGE SCALE ANALYSIS] AT SER-73</scope>
    <scope>IDENTIFICATION BY MASS SPECTROMETRY [LARGE SCALE ANALYSIS]</scope>
</reference>
<dbReference type="EMBL" id="AC009755">
    <property type="protein sequence ID" value="AAF02119.1"/>
    <property type="molecule type" value="Genomic_DNA"/>
</dbReference>
<dbReference type="EMBL" id="AC011664">
    <property type="protein sequence ID" value="AAF14820.1"/>
    <property type="molecule type" value="Genomic_DNA"/>
</dbReference>
<dbReference type="EMBL" id="CP002686">
    <property type="protein sequence ID" value="AEE73773.1"/>
    <property type="molecule type" value="Genomic_DNA"/>
</dbReference>
<dbReference type="EMBL" id="CP002686">
    <property type="protein sequence ID" value="AEE73774.1"/>
    <property type="molecule type" value="Genomic_DNA"/>
</dbReference>
<dbReference type="EMBL" id="AY045878">
    <property type="protein sequence ID" value="AAK76552.1"/>
    <property type="molecule type" value="mRNA"/>
</dbReference>
<dbReference type="EMBL" id="AY117217">
    <property type="protein sequence ID" value="AAM51292.1"/>
    <property type="molecule type" value="mRNA"/>
</dbReference>
<dbReference type="EMBL" id="AY086253">
    <property type="protein sequence ID" value="AAM64327.1"/>
    <property type="molecule type" value="mRNA"/>
</dbReference>
<dbReference type="RefSeq" id="NP_566166.1">
    <molecule id="Q9S7P8-1"/>
    <property type="nucleotide sequence ID" value="NM_111085.4"/>
</dbReference>
<dbReference type="RefSeq" id="NP_974209.1">
    <molecule id="Q9S7P8-1"/>
    <property type="nucleotide sequence ID" value="NM_202480.3"/>
</dbReference>
<dbReference type="FunCoup" id="Q9S7P8">
    <property type="interactions" value="7"/>
</dbReference>
<dbReference type="STRING" id="3702.Q9S7P8"/>
<dbReference type="iPTMnet" id="Q9S7P8"/>
<dbReference type="PaxDb" id="3702-AT3G02180.2"/>
<dbReference type="ProteomicsDB" id="232520">
    <molecule id="Q9S7P8-1"/>
</dbReference>
<dbReference type="EnsemblPlants" id="AT3G02180.1">
    <molecule id="Q9S7P8-1"/>
    <property type="protein sequence ID" value="AT3G02180.1"/>
    <property type="gene ID" value="AT3G02180"/>
</dbReference>
<dbReference type="EnsemblPlants" id="AT3G02180.2">
    <molecule id="Q9S7P8-1"/>
    <property type="protein sequence ID" value="AT3G02180.2"/>
    <property type="gene ID" value="AT3G02180"/>
</dbReference>
<dbReference type="GeneID" id="821277"/>
<dbReference type="Gramene" id="AT3G02180.1">
    <molecule id="Q9S7P8-1"/>
    <property type="protein sequence ID" value="AT3G02180.1"/>
    <property type="gene ID" value="AT3G02180"/>
</dbReference>
<dbReference type="Gramene" id="AT3G02180.2">
    <molecule id="Q9S7P8-1"/>
    <property type="protein sequence ID" value="AT3G02180.2"/>
    <property type="gene ID" value="AT3G02180"/>
</dbReference>
<dbReference type="KEGG" id="ath:AT3G02180"/>
<dbReference type="Araport" id="AT3G02180"/>
<dbReference type="TAIR" id="AT3G02180">
    <property type="gene designation" value="SP1L3"/>
</dbReference>
<dbReference type="HOGENOM" id="CLU_129558_0_0_1"/>
<dbReference type="InParanoid" id="Q9S7P8"/>
<dbReference type="OMA" id="YMRSEGQ"/>
<dbReference type="OrthoDB" id="62622at2759"/>
<dbReference type="PhylomeDB" id="Q9S7P8"/>
<dbReference type="PRO" id="PR:Q9S7P8"/>
<dbReference type="Proteomes" id="UP000006548">
    <property type="component" value="Chromosome 3"/>
</dbReference>
<dbReference type="ExpressionAtlas" id="Q9S7P8">
    <property type="expression patterns" value="baseline and differential"/>
</dbReference>
<dbReference type="GO" id="GO:0005829">
    <property type="term" value="C:cytosol"/>
    <property type="evidence" value="ECO:0007005"/>
    <property type="project" value="TAIR"/>
</dbReference>
<dbReference type="GO" id="GO:0005874">
    <property type="term" value="C:microtubule"/>
    <property type="evidence" value="ECO:0007669"/>
    <property type="project" value="UniProtKB-KW"/>
</dbReference>
<dbReference type="GO" id="GO:0043622">
    <property type="term" value="P:cortical microtubule organization"/>
    <property type="evidence" value="ECO:0007669"/>
    <property type="project" value="InterPro"/>
</dbReference>
<dbReference type="InterPro" id="IPR039613">
    <property type="entry name" value="SPR1/2/3/4/5"/>
</dbReference>
<dbReference type="PANTHER" id="PTHR33403:SF26">
    <property type="entry name" value="PROTEIN SPIRAL1-LIKE 3"/>
    <property type="match status" value="1"/>
</dbReference>
<dbReference type="PANTHER" id="PTHR33403">
    <property type="entry name" value="SPR1"/>
    <property type="match status" value="1"/>
</dbReference>
<protein>
    <recommendedName>
        <fullName>Protein SPIRAL1-like 3</fullName>
    </recommendedName>
</protein>
<proteinExistence type="evidence at protein level"/>
<organism>
    <name type="scientific">Arabidopsis thaliana</name>
    <name type="common">Mouse-ear cress</name>
    <dbReference type="NCBI Taxonomy" id="3702"/>
    <lineage>
        <taxon>Eukaryota</taxon>
        <taxon>Viridiplantae</taxon>
        <taxon>Streptophyta</taxon>
        <taxon>Embryophyta</taxon>
        <taxon>Tracheophyta</taxon>
        <taxon>Spermatophyta</taxon>
        <taxon>Magnoliopsida</taxon>
        <taxon>eudicotyledons</taxon>
        <taxon>Gunneridae</taxon>
        <taxon>Pentapetalae</taxon>
        <taxon>rosids</taxon>
        <taxon>malvids</taxon>
        <taxon>Brassicales</taxon>
        <taxon>Brassicaceae</taxon>
        <taxon>Camelineae</taxon>
        <taxon>Arabidopsis</taxon>
    </lineage>
</organism>
<feature type="chain" id="PRO_0000417955" description="Protein SPIRAL1-like 3">
    <location>
        <begin position="1"/>
        <end position="122"/>
    </location>
</feature>
<feature type="region of interest" description="Disordered" evidence="1">
    <location>
        <begin position="1"/>
        <end position="78"/>
    </location>
</feature>
<feature type="region of interest" description="Disordered" evidence="1">
    <location>
        <begin position="96"/>
        <end position="122"/>
    </location>
</feature>
<feature type="compositionally biased region" description="Low complexity" evidence="1">
    <location>
        <begin position="32"/>
        <end position="61"/>
    </location>
</feature>
<feature type="modified residue" description="Phosphoserine" evidence="4">
    <location>
        <position position="73"/>
    </location>
</feature>